<protein>
    <recommendedName>
        <fullName evidence="1">Large ribosomal subunit protein bL28</fullName>
    </recommendedName>
    <alternativeName>
        <fullName evidence="2">50S ribosomal protein L28</fullName>
    </alternativeName>
</protein>
<comment type="similarity">
    <text evidence="1">Belongs to the bacterial ribosomal protein bL28 family.</text>
</comment>
<sequence length="62" mass="6884">MAKVCYFTGRKTVSGNNRSHAMNQTKRAVKPNLQKVTVLIDGKPKKVWASARALKSGKVERV</sequence>
<keyword id="KW-1185">Reference proteome</keyword>
<keyword id="KW-0687">Ribonucleoprotein</keyword>
<keyword id="KW-0689">Ribosomal protein</keyword>
<proteinExistence type="inferred from homology"/>
<accession>P66156</accession>
<accession>Q97SE3</accession>
<feature type="chain" id="PRO_0000178564" description="Large ribosomal subunit protein bL28">
    <location>
        <begin position="1"/>
        <end position="62"/>
    </location>
</feature>
<evidence type="ECO:0000255" key="1">
    <source>
        <dbReference type="HAMAP-Rule" id="MF_00373"/>
    </source>
</evidence>
<evidence type="ECO:0000305" key="2"/>
<dbReference type="EMBL" id="AE007317">
    <property type="protein sequence ID" value="AAK99202.1"/>
    <property type="molecule type" value="Genomic_DNA"/>
</dbReference>
<dbReference type="PIR" id="F97921">
    <property type="entry name" value="F97921"/>
</dbReference>
<dbReference type="RefSeq" id="NP_357992.1">
    <property type="nucleotide sequence ID" value="NC_003098.1"/>
</dbReference>
<dbReference type="RefSeq" id="WP_001140948.1">
    <property type="nucleotide sequence ID" value="NC_003098.1"/>
</dbReference>
<dbReference type="SMR" id="P66156"/>
<dbReference type="STRING" id="171101.spr0398"/>
<dbReference type="GeneID" id="93921138"/>
<dbReference type="KEGG" id="spr:spr0398"/>
<dbReference type="PATRIC" id="fig|171101.6.peg.441"/>
<dbReference type="eggNOG" id="COG0227">
    <property type="taxonomic scope" value="Bacteria"/>
</dbReference>
<dbReference type="HOGENOM" id="CLU_064548_7_1_9"/>
<dbReference type="PRO" id="PR:P66156"/>
<dbReference type="Proteomes" id="UP000000586">
    <property type="component" value="Chromosome"/>
</dbReference>
<dbReference type="GO" id="GO:1990904">
    <property type="term" value="C:ribonucleoprotein complex"/>
    <property type="evidence" value="ECO:0007669"/>
    <property type="project" value="UniProtKB-KW"/>
</dbReference>
<dbReference type="GO" id="GO:0005840">
    <property type="term" value="C:ribosome"/>
    <property type="evidence" value="ECO:0007669"/>
    <property type="project" value="UniProtKB-KW"/>
</dbReference>
<dbReference type="GO" id="GO:0003735">
    <property type="term" value="F:structural constituent of ribosome"/>
    <property type="evidence" value="ECO:0007669"/>
    <property type="project" value="InterPro"/>
</dbReference>
<dbReference type="GO" id="GO:0006412">
    <property type="term" value="P:translation"/>
    <property type="evidence" value="ECO:0007669"/>
    <property type="project" value="UniProtKB-UniRule"/>
</dbReference>
<dbReference type="Gene3D" id="2.30.170.40">
    <property type="entry name" value="Ribosomal protein L28/L24"/>
    <property type="match status" value="1"/>
</dbReference>
<dbReference type="HAMAP" id="MF_00373">
    <property type="entry name" value="Ribosomal_bL28"/>
    <property type="match status" value="1"/>
</dbReference>
<dbReference type="InterPro" id="IPR050096">
    <property type="entry name" value="Bacterial_rp_bL28"/>
</dbReference>
<dbReference type="InterPro" id="IPR026569">
    <property type="entry name" value="Ribosomal_bL28"/>
</dbReference>
<dbReference type="InterPro" id="IPR034704">
    <property type="entry name" value="Ribosomal_bL28/bL31-like_sf"/>
</dbReference>
<dbReference type="InterPro" id="IPR001383">
    <property type="entry name" value="Ribosomal_bL28_bact-type"/>
</dbReference>
<dbReference type="InterPro" id="IPR037147">
    <property type="entry name" value="Ribosomal_bL28_sf"/>
</dbReference>
<dbReference type="NCBIfam" id="TIGR00009">
    <property type="entry name" value="L28"/>
    <property type="match status" value="1"/>
</dbReference>
<dbReference type="PANTHER" id="PTHR39080">
    <property type="entry name" value="50S RIBOSOMAL PROTEIN L28"/>
    <property type="match status" value="1"/>
</dbReference>
<dbReference type="PANTHER" id="PTHR39080:SF1">
    <property type="entry name" value="LARGE RIBOSOMAL SUBUNIT PROTEIN BL28A"/>
    <property type="match status" value="1"/>
</dbReference>
<dbReference type="Pfam" id="PF00830">
    <property type="entry name" value="Ribosomal_L28"/>
    <property type="match status" value="1"/>
</dbReference>
<dbReference type="SUPFAM" id="SSF143800">
    <property type="entry name" value="L28p-like"/>
    <property type="match status" value="1"/>
</dbReference>
<reference key="1">
    <citation type="journal article" date="2001" name="J. Bacteriol.">
        <title>Genome of the bacterium Streptococcus pneumoniae strain R6.</title>
        <authorList>
            <person name="Hoskins J."/>
            <person name="Alborn W.E. Jr."/>
            <person name="Arnold J."/>
            <person name="Blaszczak L.C."/>
            <person name="Burgett S."/>
            <person name="DeHoff B.S."/>
            <person name="Estrem S.T."/>
            <person name="Fritz L."/>
            <person name="Fu D.-J."/>
            <person name="Fuller W."/>
            <person name="Geringer C."/>
            <person name="Gilmour R."/>
            <person name="Glass J.S."/>
            <person name="Khoja H."/>
            <person name="Kraft A.R."/>
            <person name="Lagace R.E."/>
            <person name="LeBlanc D.J."/>
            <person name="Lee L.N."/>
            <person name="Lefkowitz E.J."/>
            <person name="Lu J."/>
            <person name="Matsushima P."/>
            <person name="McAhren S.M."/>
            <person name="McHenney M."/>
            <person name="McLeaster K."/>
            <person name="Mundy C.W."/>
            <person name="Nicas T.I."/>
            <person name="Norris F.H."/>
            <person name="O'Gara M."/>
            <person name="Peery R.B."/>
            <person name="Robertson G.T."/>
            <person name="Rockey P."/>
            <person name="Sun P.-M."/>
            <person name="Winkler M.E."/>
            <person name="Yang Y."/>
            <person name="Young-Bellido M."/>
            <person name="Zhao G."/>
            <person name="Zook C.A."/>
            <person name="Baltz R.H."/>
            <person name="Jaskunas S.R."/>
            <person name="Rosteck P.R. Jr."/>
            <person name="Skatrud P.L."/>
            <person name="Glass J.I."/>
        </authorList>
    </citation>
    <scope>NUCLEOTIDE SEQUENCE [LARGE SCALE GENOMIC DNA]</scope>
    <source>
        <strain>ATCC BAA-255 / R6</strain>
    </source>
</reference>
<gene>
    <name evidence="1" type="primary">rpmB</name>
    <name type="ordered locus">spr0398</name>
</gene>
<name>RL28_STRR6</name>
<organism>
    <name type="scientific">Streptococcus pneumoniae (strain ATCC BAA-255 / R6)</name>
    <dbReference type="NCBI Taxonomy" id="171101"/>
    <lineage>
        <taxon>Bacteria</taxon>
        <taxon>Bacillati</taxon>
        <taxon>Bacillota</taxon>
        <taxon>Bacilli</taxon>
        <taxon>Lactobacillales</taxon>
        <taxon>Streptococcaceae</taxon>
        <taxon>Streptococcus</taxon>
    </lineage>
</organism>